<dbReference type="EC" id="3.6.4.13" evidence="1"/>
<dbReference type="EMBL" id="BA000052">
    <property type="protein sequence ID" value="BAE60920.1"/>
    <property type="molecule type" value="Genomic_DNA"/>
</dbReference>
<dbReference type="RefSeq" id="XP_001727759.1">
    <property type="nucleotide sequence ID" value="XM_001727707.1"/>
</dbReference>
<dbReference type="SMR" id="Q2UBZ5"/>
<dbReference type="STRING" id="510516.Q2UBZ5"/>
<dbReference type="EnsemblFungi" id="BAE60920">
    <property type="protein sequence ID" value="BAE60920"/>
    <property type="gene ID" value="AO090012000805"/>
</dbReference>
<dbReference type="GeneID" id="5988233"/>
<dbReference type="KEGG" id="aor:AO090012000805"/>
<dbReference type="VEuPathDB" id="FungiDB:AO090012000805"/>
<dbReference type="HOGENOM" id="CLU_003041_26_4_1"/>
<dbReference type="OMA" id="AYKEHEC"/>
<dbReference type="OrthoDB" id="94676at5052"/>
<dbReference type="Proteomes" id="UP000006564">
    <property type="component" value="Chromosome 4"/>
</dbReference>
<dbReference type="GO" id="GO:0030686">
    <property type="term" value="C:90S preribosome"/>
    <property type="evidence" value="ECO:0007669"/>
    <property type="project" value="EnsemblFungi"/>
</dbReference>
<dbReference type="GO" id="GO:0005829">
    <property type="term" value="C:cytosol"/>
    <property type="evidence" value="ECO:0007669"/>
    <property type="project" value="TreeGrafter"/>
</dbReference>
<dbReference type="GO" id="GO:0005730">
    <property type="term" value="C:nucleolus"/>
    <property type="evidence" value="ECO:0007669"/>
    <property type="project" value="UniProtKB-SubCell"/>
</dbReference>
<dbReference type="GO" id="GO:0005654">
    <property type="term" value="C:nucleoplasm"/>
    <property type="evidence" value="ECO:0007669"/>
    <property type="project" value="EnsemblFungi"/>
</dbReference>
<dbReference type="GO" id="GO:0030687">
    <property type="term" value="C:preribosome, large subunit precursor"/>
    <property type="evidence" value="ECO:0007669"/>
    <property type="project" value="EnsemblFungi"/>
</dbReference>
<dbReference type="GO" id="GO:0005524">
    <property type="term" value="F:ATP binding"/>
    <property type="evidence" value="ECO:0007669"/>
    <property type="project" value="UniProtKB-KW"/>
</dbReference>
<dbReference type="GO" id="GO:0016887">
    <property type="term" value="F:ATP hydrolysis activity"/>
    <property type="evidence" value="ECO:0007669"/>
    <property type="project" value="RHEA"/>
</dbReference>
<dbReference type="GO" id="GO:0003723">
    <property type="term" value="F:RNA binding"/>
    <property type="evidence" value="ECO:0007669"/>
    <property type="project" value="UniProtKB-KW"/>
</dbReference>
<dbReference type="GO" id="GO:0003724">
    <property type="term" value="F:RNA helicase activity"/>
    <property type="evidence" value="ECO:0007669"/>
    <property type="project" value="UniProtKB-EC"/>
</dbReference>
<dbReference type="GO" id="GO:1902626">
    <property type="term" value="P:assembly of large subunit precursor of preribosome"/>
    <property type="evidence" value="ECO:0007669"/>
    <property type="project" value="EnsemblFungi"/>
</dbReference>
<dbReference type="GO" id="GO:0000470">
    <property type="term" value="P:maturation of LSU-rRNA"/>
    <property type="evidence" value="ECO:0007669"/>
    <property type="project" value="EnsemblFungi"/>
</dbReference>
<dbReference type="CDD" id="cd17960">
    <property type="entry name" value="DEADc_DDX55"/>
    <property type="match status" value="1"/>
</dbReference>
<dbReference type="CDD" id="cd18787">
    <property type="entry name" value="SF2_C_DEAD"/>
    <property type="match status" value="1"/>
</dbReference>
<dbReference type="Gene3D" id="3.40.50.300">
    <property type="entry name" value="P-loop containing nucleotide triphosphate hydrolases"/>
    <property type="match status" value="2"/>
</dbReference>
<dbReference type="InterPro" id="IPR056330">
    <property type="entry name" value="CTT_SPB4"/>
</dbReference>
<dbReference type="InterPro" id="IPR011545">
    <property type="entry name" value="DEAD/DEAH_box_helicase_dom"/>
</dbReference>
<dbReference type="InterPro" id="IPR050079">
    <property type="entry name" value="DEAD_box_RNA_helicase"/>
</dbReference>
<dbReference type="InterPro" id="IPR014001">
    <property type="entry name" value="Helicase_ATP-bd"/>
</dbReference>
<dbReference type="InterPro" id="IPR001650">
    <property type="entry name" value="Helicase_C-like"/>
</dbReference>
<dbReference type="InterPro" id="IPR027417">
    <property type="entry name" value="P-loop_NTPase"/>
</dbReference>
<dbReference type="InterPro" id="IPR000629">
    <property type="entry name" value="RNA-helicase_DEAD-box_CS"/>
</dbReference>
<dbReference type="InterPro" id="IPR014014">
    <property type="entry name" value="RNA_helicase_DEAD_Q_motif"/>
</dbReference>
<dbReference type="InterPro" id="IPR025313">
    <property type="entry name" value="SPB4-like_CTE"/>
</dbReference>
<dbReference type="PANTHER" id="PTHR47959:SF1">
    <property type="entry name" value="ATP-DEPENDENT RNA HELICASE DBPA"/>
    <property type="match status" value="1"/>
</dbReference>
<dbReference type="PANTHER" id="PTHR47959">
    <property type="entry name" value="ATP-DEPENDENT RNA HELICASE RHLE-RELATED"/>
    <property type="match status" value="1"/>
</dbReference>
<dbReference type="Pfam" id="PF13959">
    <property type="entry name" value="CTE_SPB4"/>
    <property type="match status" value="1"/>
</dbReference>
<dbReference type="Pfam" id="PF23681">
    <property type="entry name" value="CTT_SPB4"/>
    <property type="match status" value="1"/>
</dbReference>
<dbReference type="Pfam" id="PF00270">
    <property type="entry name" value="DEAD"/>
    <property type="match status" value="1"/>
</dbReference>
<dbReference type="Pfam" id="PF00271">
    <property type="entry name" value="Helicase_C"/>
    <property type="match status" value="1"/>
</dbReference>
<dbReference type="SMART" id="SM00487">
    <property type="entry name" value="DEXDc"/>
    <property type="match status" value="1"/>
</dbReference>
<dbReference type="SMART" id="SM01178">
    <property type="entry name" value="DUF4217"/>
    <property type="match status" value="1"/>
</dbReference>
<dbReference type="SMART" id="SM00490">
    <property type="entry name" value="HELICc"/>
    <property type="match status" value="1"/>
</dbReference>
<dbReference type="SUPFAM" id="SSF52540">
    <property type="entry name" value="P-loop containing nucleoside triphosphate hydrolases"/>
    <property type="match status" value="2"/>
</dbReference>
<dbReference type="PROSITE" id="PS00039">
    <property type="entry name" value="DEAD_ATP_HELICASE"/>
    <property type="match status" value="1"/>
</dbReference>
<dbReference type="PROSITE" id="PS51192">
    <property type="entry name" value="HELICASE_ATP_BIND_1"/>
    <property type="match status" value="1"/>
</dbReference>
<dbReference type="PROSITE" id="PS51194">
    <property type="entry name" value="HELICASE_CTER"/>
    <property type="match status" value="1"/>
</dbReference>
<dbReference type="PROSITE" id="PS51195">
    <property type="entry name" value="Q_MOTIF"/>
    <property type="match status" value="1"/>
</dbReference>
<gene>
    <name evidence="1" type="primary">spb4</name>
    <name type="ORF">AO090012000805</name>
</gene>
<organism>
    <name type="scientific">Aspergillus oryzae (strain ATCC 42149 / RIB 40)</name>
    <name type="common">Yellow koji mold</name>
    <dbReference type="NCBI Taxonomy" id="510516"/>
    <lineage>
        <taxon>Eukaryota</taxon>
        <taxon>Fungi</taxon>
        <taxon>Dikarya</taxon>
        <taxon>Ascomycota</taxon>
        <taxon>Pezizomycotina</taxon>
        <taxon>Eurotiomycetes</taxon>
        <taxon>Eurotiomycetidae</taxon>
        <taxon>Eurotiales</taxon>
        <taxon>Aspergillaceae</taxon>
        <taxon>Aspergillus</taxon>
        <taxon>Aspergillus subgen. Circumdati</taxon>
    </lineage>
</organism>
<sequence length="638" mass="71581">MAPKPPAGTSSRAWDGVSPSLSEWVLEAVSSMGFTRMTPVQASAIPLFMAHKDVVVEAVTGSGKTLSFLIPIVEKLLRLEEPIKKHHVGAIIISPTRELASQIYHVLLSLLAFHPPSASVINPSEDDDVPRQKFPSSTLKVVPQLLLGGSTTPAEDLSKFLKQSPNLLVSTPGRLLELLSSPHVHCPQSSFEMLVLDEADRLLDLGFKETLQNIIRRLPKQRRTGLFSASISEAVDQIVRVGLRNPVKVMVKVKGTSGAQDKRTPASLQMTYLTTPTIHKFDALKHILHSVDPTPQKTIFFASTCSGVDYLSAILPLILGDDFQLISLHGKHPANVREKNFNRFVNSYSPAILLTTDVASRGLDIPSVDLVVQIDPPSDPKTFIHRCGRAGRAGRRGLSVVLLHPGREEDYVSFLEVRKTPVAPFPHPISFSESEATAATKAVRKAVLADRALHDRGQKAFVSWLRSYSKHQASSIFRVADLDWESLGKAWGLLKLPKMPELRNFTGDRTLGVNLDWDDYKYKDKQREKRRIELLQESKEGDGTQESSNKRKATETTAWSNKLDDRNKKQKRREQKQRRQEKNKWEKMTEEERQKIRETEQMVESIRVKNEEERRLRRAGKAEAANAGKDEEEFEGFD</sequence>
<evidence type="ECO:0000250" key="1">
    <source>
        <dbReference type="UniProtKB" id="P25808"/>
    </source>
</evidence>
<evidence type="ECO:0000255" key="2"/>
<evidence type="ECO:0000255" key="3">
    <source>
        <dbReference type="PROSITE-ProRule" id="PRU00541"/>
    </source>
</evidence>
<evidence type="ECO:0000255" key="4">
    <source>
        <dbReference type="PROSITE-ProRule" id="PRU00542"/>
    </source>
</evidence>
<evidence type="ECO:0000256" key="5">
    <source>
        <dbReference type="SAM" id="MobiDB-lite"/>
    </source>
</evidence>
<evidence type="ECO:0000305" key="6"/>
<keyword id="KW-0067">ATP-binding</keyword>
<keyword id="KW-0175">Coiled coil</keyword>
<keyword id="KW-0347">Helicase</keyword>
<keyword id="KW-0378">Hydrolase</keyword>
<keyword id="KW-0547">Nucleotide-binding</keyword>
<keyword id="KW-0539">Nucleus</keyword>
<keyword id="KW-1185">Reference proteome</keyword>
<keyword id="KW-0690">Ribosome biogenesis</keyword>
<keyword id="KW-0694">RNA-binding</keyword>
<keyword id="KW-0698">rRNA processing</keyword>
<protein>
    <recommendedName>
        <fullName evidence="6">ATP-dependent rRNA helicase spb4</fullName>
        <ecNumber evidence="1">3.6.4.13</ecNumber>
    </recommendedName>
</protein>
<accession>Q2UBZ5</accession>
<proteinExistence type="inferred from homology"/>
<name>SPB4_ASPOR</name>
<feature type="chain" id="PRO_0000232322" description="ATP-dependent rRNA helicase spb4">
    <location>
        <begin position="1"/>
        <end position="638"/>
    </location>
</feature>
<feature type="domain" description="Helicase ATP-binding" evidence="3">
    <location>
        <begin position="45"/>
        <end position="249"/>
    </location>
</feature>
<feature type="domain" description="Helicase C-terminal" evidence="4">
    <location>
        <begin position="283"/>
        <end position="437"/>
    </location>
</feature>
<feature type="region of interest" description="Disordered" evidence="5">
    <location>
        <begin position="534"/>
        <end position="638"/>
    </location>
</feature>
<feature type="coiled-coil region" evidence="2">
    <location>
        <begin position="566"/>
        <end position="619"/>
    </location>
</feature>
<feature type="short sequence motif" description="Q motif" evidence="6">
    <location>
        <begin position="14"/>
        <end position="42"/>
    </location>
</feature>
<feature type="short sequence motif" description="DEAD box" evidence="6">
    <location>
        <begin position="197"/>
        <end position="200"/>
    </location>
</feature>
<feature type="compositionally biased region" description="Basic and acidic residues" evidence="5">
    <location>
        <begin position="534"/>
        <end position="554"/>
    </location>
</feature>
<feature type="compositionally biased region" description="Basic and acidic residues" evidence="5">
    <location>
        <begin position="577"/>
        <end position="615"/>
    </location>
</feature>
<feature type="binding site" evidence="3">
    <location>
        <begin position="58"/>
        <end position="65"/>
    </location>
    <ligand>
        <name>ATP</name>
        <dbReference type="ChEBI" id="CHEBI:30616"/>
    </ligand>
</feature>
<comment type="function">
    <text evidence="1">ATP-binding RNA helicase involved in the biogenesis of 60S ribosomal subunits. Binds 90S pre-ribosomal particles and dissociates from pre-60S ribosomal particles after processing of 27SB pre-rRNA. Required for the normal formation of 18S rRNA through the processing of pre-rRNAs at sites A0, A1 and A2, and the normal formation of 25S and 5.8S rRNAs through the processing of pre-rRNAs at sites C1 and C2.</text>
</comment>
<comment type="catalytic activity">
    <reaction evidence="1">
        <text>ATP + H2O = ADP + phosphate + H(+)</text>
        <dbReference type="Rhea" id="RHEA:13065"/>
        <dbReference type="ChEBI" id="CHEBI:15377"/>
        <dbReference type="ChEBI" id="CHEBI:15378"/>
        <dbReference type="ChEBI" id="CHEBI:30616"/>
        <dbReference type="ChEBI" id="CHEBI:43474"/>
        <dbReference type="ChEBI" id="CHEBI:456216"/>
        <dbReference type="EC" id="3.6.4.13"/>
    </reaction>
</comment>
<comment type="subunit">
    <text evidence="1">Component of pre-60S ribosomal complexes.</text>
</comment>
<comment type="subcellular location">
    <subcellularLocation>
        <location evidence="1">Nucleus</location>
        <location evidence="1">Nucleolus</location>
    </subcellularLocation>
</comment>
<comment type="domain">
    <text>The Q motif is unique to and characteristic of the DEAD box family of RNA helicases and controls ATP binding and hydrolysis.</text>
</comment>
<comment type="similarity">
    <text evidence="6">Belongs to the DEAD box helicase family. DDX55/SPB4 subfamily.</text>
</comment>
<reference key="1">
    <citation type="journal article" date="2005" name="Nature">
        <title>Genome sequencing and analysis of Aspergillus oryzae.</title>
        <authorList>
            <person name="Machida M."/>
            <person name="Asai K."/>
            <person name="Sano M."/>
            <person name="Tanaka T."/>
            <person name="Kumagai T."/>
            <person name="Terai G."/>
            <person name="Kusumoto K."/>
            <person name="Arima T."/>
            <person name="Akita O."/>
            <person name="Kashiwagi Y."/>
            <person name="Abe K."/>
            <person name="Gomi K."/>
            <person name="Horiuchi H."/>
            <person name="Kitamoto K."/>
            <person name="Kobayashi T."/>
            <person name="Takeuchi M."/>
            <person name="Denning D.W."/>
            <person name="Galagan J.E."/>
            <person name="Nierman W.C."/>
            <person name="Yu J."/>
            <person name="Archer D.B."/>
            <person name="Bennett J.W."/>
            <person name="Bhatnagar D."/>
            <person name="Cleveland T.E."/>
            <person name="Fedorova N.D."/>
            <person name="Gotoh O."/>
            <person name="Horikawa H."/>
            <person name="Hosoyama A."/>
            <person name="Ichinomiya M."/>
            <person name="Igarashi R."/>
            <person name="Iwashita K."/>
            <person name="Juvvadi P.R."/>
            <person name="Kato M."/>
            <person name="Kato Y."/>
            <person name="Kin T."/>
            <person name="Kokubun A."/>
            <person name="Maeda H."/>
            <person name="Maeyama N."/>
            <person name="Maruyama J."/>
            <person name="Nagasaki H."/>
            <person name="Nakajima T."/>
            <person name="Oda K."/>
            <person name="Okada K."/>
            <person name="Paulsen I."/>
            <person name="Sakamoto K."/>
            <person name="Sawano T."/>
            <person name="Takahashi M."/>
            <person name="Takase K."/>
            <person name="Terabayashi Y."/>
            <person name="Wortman J.R."/>
            <person name="Yamada O."/>
            <person name="Yamagata Y."/>
            <person name="Anazawa H."/>
            <person name="Hata Y."/>
            <person name="Koide Y."/>
            <person name="Komori T."/>
            <person name="Koyama Y."/>
            <person name="Minetoki T."/>
            <person name="Suharnan S."/>
            <person name="Tanaka A."/>
            <person name="Isono K."/>
            <person name="Kuhara S."/>
            <person name="Ogasawara N."/>
            <person name="Kikuchi H."/>
        </authorList>
    </citation>
    <scope>NUCLEOTIDE SEQUENCE [LARGE SCALE GENOMIC DNA]</scope>
    <source>
        <strain>ATCC 42149 / RIB 40</strain>
    </source>
</reference>